<name>CPS12_ACTPL</name>
<reference key="1">
    <citation type="submission" date="2003-12" db="EMBL/GenBank/DDBJ databases">
        <title>Cloning and sequencing of a serotype specific DNA region in Actinobacillus pleuropneumoniae serotype 12 and its application for PCR based identification.</title>
        <authorList>
            <person name="Jessing S."/>
            <person name="Ahrens P."/>
            <person name="Angen Y."/>
        </authorList>
    </citation>
    <scope>NUCLEOTIDE SEQUENCE [GENOMIC DNA]</scope>
    <source>
        <strain>8329</strain>
    </source>
</reference>
<reference key="2">
    <citation type="journal article" date="2005" name="PLoS Comput. Biol.">
        <title>Stealth proteins: in silico identification of a novel protein family rendering bacterial pathogens invisible to host immune defense.</title>
        <authorList>
            <person name="Sperisen P."/>
            <person name="Schmid C.D."/>
            <person name="Bucher P."/>
            <person name="Zilian O."/>
        </authorList>
    </citation>
    <scope>IDENTIFICATION AS A STEALTH PROTEIN</scope>
    <scope>PREDICTION OF FUNCTION</scope>
</reference>
<reference key="3">
    <citation type="journal article" date="2012" name="Inflamm. Bowel Dis.">
        <title>Control of NOD2 and Rip2-dependent innate immune activation by GEF-H1.</title>
        <authorList>
            <person name="Zhao Y."/>
            <person name="Alonso C."/>
            <person name="Ballester I."/>
            <person name="Song J.H."/>
            <person name="Chang S.Y."/>
            <person name="Guleng B."/>
            <person name="Arihiro S."/>
            <person name="Murray P.J."/>
            <person name="Xavier R."/>
            <person name="Kobayashi K.S."/>
            <person name="Reinecker H.C."/>
        </authorList>
    </citation>
    <scope>FUNCTION</scope>
    <scope>IDENTIFICATION IN A COMPLEX WITH NOD2 AND RIPK2</scope>
    <scope>INTERACTION WITH RIPK1; RIPK2 AND RIPK3</scope>
    <scope>SUBCELLULAR LOCATION</scope>
    <scope>INDUCTION</scope>
</reference>
<accession>Q69AA9</accession>
<protein>
    <recommendedName>
        <fullName>Capsular polysaccharide phosphotransferase cps12A</fullName>
        <ecNumber>2.7.-.-</ecNumber>
    </recommendedName>
    <alternativeName>
        <fullName>Stealth protein cps12A</fullName>
    </alternativeName>
</protein>
<organism>
    <name type="scientific">Actinobacillus pleuropneumoniae</name>
    <name type="common">Haemophilus pleuropneumoniae</name>
    <dbReference type="NCBI Taxonomy" id="715"/>
    <lineage>
        <taxon>Bacteria</taxon>
        <taxon>Pseudomonadati</taxon>
        <taxon>Pseudomonadota</taxon>
        <taxon>Gammaproteobacteria</taxon>
        <taxon>Pasteurellales</taxon>
        <taxon>Pasteurellaceae</taxon>
        <taxon>Actinobacillus</taxon>
    </lineage>
</organism>
<proteinExistence type="evidence at protein level"/>
<feature type="chain" id="PRO_0000235941" description="Capsular polysaccharide phosphotransferase cps12A">
    <location>
        <begin position="1"/>
        <end position="371"/>
    </location>
</feature>
<comment type="function">
    <text evidence="1">Part of a capsular polysaccharide synthesis locus.</text>
</comment>
<comment type="miscellaneous">
    <text>Stealth proteins are part of a protein family that is conserved from bacteria to higher eukaryotes. Family members were first identified in microbes as proteins that help pathogens to elude the host innate immune system. Microbial stealth proteins are involved in the biosynthesis of exopolysaccharides. Stealth proteins are predicted to function as hexose-1-phosphoryltransferases.</text>
</comment>
<comment type="similarity">
    <text evidence="2">Belongs to the stealth family.</text>
</comment>
<evidence type="ECO:0000269" key="1">
    <source>
    </source>
</evidence>
<evidence type="ECO:0000305" key="2"/>
<sequence>MNKMNRKFSKLLKNPHIFFRDFLNKKYPIKNTELPFSESEEANLIEANQKLDKIIQKNTLQQANIDVVFTWVDGSDPSWQAKYSQYAPNYQAKSALYATDIARFEDHNELYYSVHAVLKYMPWVRHIFIITDNQKPKWLDETRQEKITLIDHQDIIDKEYLPTFNSHVIEAFLHKIPNLSENFIYFNDDVFIARELQAEHFFQANGIASIFVSEKSLSKMRDKGIITPTLSASEYSIRLLNKYYDTNIDSPLVHTYIPLKKSMYELAWLRYEKAILGFLPNKLRTNNDLNFANFLIPWLMYFEGKAMPKIDICYYFNIRSPNAISLYKKLLLKQQMGEEPNSFCANDFNSNYSIENYRNNLISTLNNYYKF</sequence>
<gene>
    <name type="primary">cps12A</name>
</gene>
<dbReference type="EC" id="2.7.-.-"/>
<dbReference type="EMBL" id="AY496881">
    <property type="protein sequence ID" value="AAS77490.1"/>
    <property type="molecule type" value="Genomic_DNA"/>
</dbReference>
<dbReference type="RefSeq" id="WP_005615976.1">
    <property type="nucleotide sequence ID" value="NZ_CP173319.1"/>
</dbReference>
<dbReference type="SMR" id="Q69AA9"/>
<dbReference type="GO" id="GO:0016772">
    <property type="term" value="F:transferase activity, transferring phosphorus-containing groups"/>
    <property type="evidence" value="ECO:0007669"/>
    <property type="project" value="InterPro"/>
</dbReference>
<dbReference type="GO" id="GO:0000271">
    <property type="term" value="P:polysaccharide biosynthetic process"/>
    <property type="evidence" value="ECO:0007669"/>
    <property type="project" value="UniProtKB-KW"/>
</dbReference>
<dbReference type="InterPro" id="IPR047141">
    <property type="entry name" value="Stealth"/>
</dbReference>
<dbReference type="InterPro" id="IPR031358">
    <property type="entry name" value="Stealth_CR1"/>
</dbReference>
<dbReference type="InterPro" id="IPR021520">
    <property type="entry name" value="Stealth_CR2"/>
</dbReference>
<dbReference type="PANTHER" id="PTHR24045">
    <property type="match status" value="1"/>
</dbReference>
<dbReference type="PANTHER" id="PTHR24045:SF0">
    <property type="entry name" value="N-ACETYLGLUCOSAMINE-1-PHOSPHOTRANSFERASE SUBUNITS ALPHA_BETA"/>
    <property type="match status" value="1"/>
</dbReference>
<dbReference type="Pfam" id="PF17101">
    <property type="entry name" value="Stealth_CR1"/>
    <property type="match status" value="1"/>
</dbReference>
<dbReference type="Pfam" id="PF11380">
    <property type="entry name" value="Stealth_CR2"/>
    <property type="match status" value="1"/>
</dbReference>
<keyword id="KW-0270">Exopolysaccharide synthesis</keyword>
<keyword id="KW-0808">Transferase</keyword>